<proteinExistence type="inferred from homology"/>
<name>KAD_STRP3</name>
<feature type="chain" id="PRO_0000158863" description="Adenylate kinase">
    <location>
        <begin position="1"/>
        <end position="212"/>
    </location>
</feature>
<feature type="region of interest" description="NMP" evidence="1">
    <location>
        <begin position="30"/>
        <end position="59"/>
    </location>
</feature>
<feature type="region of interest" description="LID" evidence="1">
    <location>
        <begin position="127"/>
        <end position="159"/>
    </location>
</feature>
<feature type="binding site" evidence="1">
    <location>
        <begin position="10"/>
        <end position="15"/>
    </location>
    <ligand>
        <name>ATP</name>
        <dbReference type="ChEBI" id="CHEBI:30616"/>
    </ligand>
</feature>
<feature type="binding site" evidence="1">
    <location>
        <position position="31"/>
    </location>
    <ligand>
        <name>AMP</name>
        <dbReference type="ChEBI" id="CHEBI:456215"/>
    </ligand>
</feature>
<feature type="binding site" evidence="1">
    <location>
        <position position="36"/>
    </location>
    <ligand>
        <name>AMP</name>
        <dbReference type="ChEBI" id="CHEBI:456215"/>
    </ligand>
</feature>
<feature type="binding site" evidence="1">
    <location>
        <begin position="57"/>
        <end position="59"/>
    </location>
    <ligand>
        <name>AMP</name>
        <dbReference type="ChEBI" id="CHEBI:456215"/>
    </ligand>
</feature>
<feature type="binding site" evidence="1">
    <location>
        <begin position="86"/>
        <end position="89"/>
    </location>
    <ligand>
        <name>AMP</name>
        <dbReference type="ChEBI" id="CHEBI:456215"/>
    </ligand>
</feature>
<feature type="binding site" evidence="1">
    <location>
        <position position="93"/>
    </location>
    <ligand>
        <name>AMP</name>
        <dbReference type="ChEBI" id="CHEBI:456215"/>
    </ligand>
</feature>
<feature type="binding site" evidence="1">
    <location>
        <position position="128"/>
    </location>
    <ligand>
        <name>ATP</name>
        <dbReference type="ChEBI" id="CHEBI:30616"/>
    </ligand>
</feature>
<feature type="binding site" evidence="1">
    <location>
        <begin position="137"/>
        <end position="138"/>
    </location>
    <ligand>
        <name>ATP</name>
        <dbReference type="ChEBI" id="CHEBI:30616"/>
    </ligand>
</feature>
<feature type="binding site" evidence="1">
    <location>
        <position position="156"/>
    </location>
    <ligand>
        <name>AMP</name>
        <dbReference type="ChEBI" id="CHEBI:456215"/>
    </ligand>
</feature>
<feature type="binding site" evidence="1">
    <location>
        <position position="167"/>
    </location>
    <ligand>
        <name>AMP</name>
        <dbReference type="ChEBI" id="CHEBI:456215"/>
    </ligand>
</feature>
<feature type="binding site" evidence="1">
    <location>
        <position position="195"/>
    </location>
    <ligand>
        <name>ATP</name>
        <dbReference type="ChEBI" id="CHEBI:30616"/>
    </ligand>
</feature>
<sequence>MNLLIMGLPGAGKGTQAAKIVEEFGVAHISTGDMFRAAMANQTEMGRLAKSYIDKGELVPDEVTNGIVKERLAEDDIAEKGFLLDGYPRTIEQAHALDATLEELGLRLDGVINIKVDPSCLVERLSGRIINRKTGETFHKVFNPPVDYKEEDYYQREDDKPETVKRRLDVNMAQGEPILEHYRKLGLVTDIEGNQEITDVFADVEKALLELK</sequence>
<dbReference type="EC" id="2.7.4.3" evidence="1"/>
<dbReference type="EMBL" id="AE014074">
    <property type="protein sequence ID" value="AAM78668.1"/>
    <property type="molecule type" value="Genomic_DNA"/>
</dbReference>
<dbReference type="RefSeq" id="WP_011054106.1">
    <property type="nucleotide sequence ID" value="NC_004070.1"/>
</dbReference>
<dbReference type="SMR" id="P0DB92"/>
<dbReference type="KEGG" id="spg:SpyM3_0061"/>
<dbReference type="HOGENOM" id="CLU_032354_1_2_9"/>
<dbReference type="UniPathway" id="UPA00588">
    <property type="reaction ID" value="UER00649"/>
</dbReference>
<dbReference type="Proteomes" id="UP000000564">
    <property type="component" value="Chromosome"/>
</dbReference>
<dbReference type="GO" id="GO:0005737">
    <property type="term" value="C:cytoplasm"/>
    <property type="evidence" value="ECO:0007669"/>
    <property type="project" value="UniProtKB-SubCell"/>
</dbReference>
<dbReference type="GO" id="GO:0004017">
    <property type="term" value="F:adenylate kinase activity"/>
    <property type="evidence" value="ECO:0007669"/>
    <property type="project" value="UniProtKB-UniRule"/>
</dbReference>
<dbReference type="GO" id="GO:0005524">
    <property type="term" value="F:ATP binding"/>
    <property type="evidence" value="ECO:0007669"/>
    <property type="project" value="UniProtKB-UniRule"/>
</dbReference>
<dbReference type="GO" id="GO:0044209">
    <property type="term" value="P:AMP salvage"/>
    <property type="evidence" value="ECO:0007669"/>
    <property type="project" value="UniProtKB-UniRule"/>
</dbReference>
<dbReference type="CDD" id="cd01428">
    <property type="entry name" value="ADK"/>
    <property type="match status" value="1"/>
</dbReference>
<dbReference type="FunFam" id="3.40.50.300:FF:000106">
    <property type="entry name" value="Adenylate kinase mitochondrial"/>
    <property type="match status" value="1"/>
</dbReference>
<dbReference type="Gene3D" id="3.40.50.300">
    <property type="entry name" value="P-loop containing nucleotide triphosphate hydrolases"/>
    <property type="match status" value="1"/>
</dbReference>
<dbReference type="HAMAP" id="MF_00235">
    <property type="entry name" value="Adenylate_kinase_Adk"/>
    <property type="match status" value="1"/>
</dbReference>
<dbReference type="InterPro" id="IPR006259">
    <property type="entry name" value="Adenyl_kin_sub"/>
</dbReference>
<dbReference type="InterPro" id="IPR000850">
    <property type="entry name" value="Adenylat/UMP-CMP_kin"/>
</dbReference>
<dbReference type="InterPro" id="IPR033690">
    <property type="entry name" value="Adenylat_kinase_CS"/>
</dbReference>
<dbReference type="InterPro" id="IPR027417">
    <property type="entry name" value="P-loop_NTPase"/>
</dbReference>
<dbReference type="NCBIfam" id="TIGR01351">
    <property type="entry name" value="adk"/>
    <property type="match status" value="1"/>
</dbReference>
<dbReference type="NCBIfam" id="NF001380">
    <property type="entry name" value="PRK00279.1-2"/>
    <property type="match status" value="1"/>
</dbReference>
<dbReference type="NCBIfam" id="NF001381">
    <property type="entry name" value="PRK00279.1-3"/>
    <property type="match status" value="1"/>
</dbReference>
<dbReference type="NCBIfam" id="NF001382">
    <property type="entry name" value="PRK00279.1-4"/>
    <property type="match status" value="1"/>
</dbReference>
<dbReference type="NCBIfam" id="NF011100">
    <property type="entry name" value="PRK14527.1"/>
    <property type="match status" value="1"/>
</dbReference>
<dbReference type="PANTHER" id="PTHR23359">
    <property type="entry name" value="NUCLEOTIDE KINASE"/>
    <property type="match status" value="1"/>
</dbReference>
<dbReference type="Pfam" id="PF00406">
    <property type="entry name" value="ADK"/>
    <property type="match status" value="1"/>
</dbReference>
<dbReference type="PRINTS" id="PR00094">
    <property type="entry name" value="ADENYLTKNASE"/>
</dbReference>
<dbReference type="SUPFAM" id="SSF52540">
    <property type="entry name" value="P-loop containing nucleoside triphosphate hydrolases"/>
    <property type="match status" value="1"/>
</dbReference>
<dbReference type="PROSITE" id="PS00113">
    <property type="entry name" value="ADENYLATE_KINASE"/>
    <property type="match status" value="1"/>
</dbReference>
<organism>
    <name type="scientific">Streptococcus pyogenes serotype M3 (strain ATCC BAA-595 / MGAS315)</name>
    <dbReference type="NCBI Taxonomy" id="198466"/>
    <lineage>
        <taxon>Bacteria</taxon>
        <taxon>Bacillati</taxon>
        <taxon>Bacillota</taxon>
        <taxon>Bacilli</taxon>
        <taxon>Lactobacillales</taxon>
        <taxon>Streptococcaceae</taxon>
        <taxon>Streptococcus</taxon>
    </lineage>
</organism>
<comment type="function">
    <text evidence="1">Catalyzes the reversible transfer of the terminal phosphate group between ATP and AMP. Plays an important role in cellular energy homeostasis and in adenine nucleotide metabolism.</text>
</comment>
<comment type="catalytic activity">
    <reaction evidence="1">
        <text>AMP + ATP = 2 ADP</text>
        <dbReference type="Rhea" id="RHEA:12973"/>
        <dbReference type="ChEBI" id="CHEBI:30616"/>
        <dbReference type="ChEBI" id="CHEBI:456215"/>
        <dbReference type="ChEBI" id="CHEBI:456216"/>
        <dbReference type="EC" id="2.7.4.3"/>
    </reaction>
</comment>
<comment type="pathway">
    <text evidence="1">Purine metabolism; AMP biosynthesis via salvage pathway; AMP from ADP: step 1/1.</text>
</comment>
<comment type="subunit">
    <text evidence="1">Monomer.</text>
</comment>
<comment type="subcellular location">
    <subcellularLocation>
        <location evidence="1">Cytoplasm</location>
    </subcellularLocation>
</comment>
<comment type="domain">
    <text evidence="1">Consists of three domains, a large central CORE domain and two small peripheral domains, NMPbind and LID, which undergo movements during catalysis. The LID domain closes over the site of phosphoryl transfer upon ATP binding. Assembling and dissambling the active center during each catalytic cycle provides an effective means to prevent ATP hydrolysis.</text>
</comment>
<comment type="similarity">
    <text evidence="1">Belongs to the adenylate kinase family.</text>
</comment>
<gene>
    <name evidence="1" type="primary">adk</name>
    <name type="ordered locus">SpyM3_0061</name>
</gene>
<reference key="1">
    <citation type="journal article" date="2002" name="Proc. Natl. Acad. Sci. U.S.A.">
        <title>Genome sequence of a serotype M3 strain of group A Streptococcus: phage-encoded toxins, the high-virulence phenotype, and clone emergence.</title>
        <authorList>
            <person name="Beres S.B."/>
            <person name="Sylva G.L."/>
            <person name="Barbian K.D."/>
            <person name="Lei B."/>
            <person name="Hoff J.S."/>
            <person name="Mammarella N.D."/>
            <person name="Liu M.-Y."/>
            <person name="Smoot J.C."/>
            <person name="Porcella S.F."/>
            <person name="Parkins L.D."/>
            <person name="Campbell D.S."/>
            <person name="Smith T.M."/>
            <person name="McCormick J.K."/>
            <person name="Leung D.Y.M."/>
            <person name="Schlievert P.M."/>
            <person name="Musser J.M."/>
        </authorList>
    </citation>
    <scope>NUCLEOTIDE SEQUENCE [LARGE SCALE GENOMIC DNA]</scope>
    <source>
        <strain>ATCC BAA-595 / MGAS315</strain>
    </source>
</reference>
<protein>
    <recommendedName>
        <fullName evidence="1">Adenylate kinase</fullName>
        <shortName evidence="1">AK</shortName>
        <ecNumber evidence="1">2.7.4.3</ecNumber>
    </recommendedName>
    <alternativeName>
        <fullName evidence="1">ATP-AMP transphosphorylase</fullName>
    </alternativeName>
    <alternativeName>
        <fullName evidence="1">ATP:AMP phosphotransferase</fullName>
    </alternativeName>
    <alternativeName>
        <fullName evidence="1">Adenylate monophosphate kinase</fullName>
    </alternativeName>
</protein>
<keyword id="KW-0067">ATP-binding</keyword>
<keyword id="KW-0963">Cytoplasm</keyword>
<keyword id="KW-0418">Kinase</keyword>
<keyword id="KW-0545">Nucleotide biosynthesis</keyword>
<keyword id="KW-0547">Nucleotide-binding</keyword>
<keyword id="KW-0808">Transferase</keyword>
<accession>P0DB92</accession>
<accession>Q8K8X1</accession>
<evidence type="ECO:0000255" key="1">
    <source>
        <dbReference type="HAMAP-Rule" id="MF_00235"/>
    </source>
</evidence>